<sequence>MFRYKQVMVIRKDLKLSKGKMAVQVAHGAVTAALKVQKEKPEWFKAWFHEGQKKVVVKAENERELFELKAHAEKLGIPTALIRDAGLTEIPPGTITCLAVGPAPEELVDKVTGHLKLV</sequence>
<organism>
    <name type="scientific">Thermococcus onnurineus (strain NA1)</name>
    <dbReference type="NCBI Taxonomy" id="523850"/>
    <lineage>
        <taxon>Archaea</taxon>
        <taxon>Methanobacteriati</taxon>
        <taxon>Methanobacteriota</taxon>
        <taxon>Thermococci</taxon>
        <taxon>Thermococcales</taxon>
        <taxon>Thermococcaceae</taxon>
        <taxon>Thermococcus</taxon>
    </lineage>
</organism>
<evidence type="ECO:0000255" key="1">
    <source>
        <dbReference type="HAMAP-Rule" id="MF_00628"/>
    </source>
</evidence>
<feature type="chain" id="PRO_1000130579" description="Peptidyl-tRNA hydrolase">
    <location>
        <begin position="1"/>
        <end position="118"/>
    </location>
</feature>
<gene>
    <name evidence="1" type="primary">pth</name>
    <name type="ordered locus">TON_0345</name>
</gene>
<protein>
    <recommendedName>
        <fullName evidence="1">Peptidyl-tRNA hydrolase</fullName>
        <shortName evidence="1">PTH</shortName>
        <ecNumber evidence="1">3.1.1.29</ecNumber>
    </recommendedName>
</protein>
<dbReference type="EC" id="3.1.1.29" evidence="1"/>
<dbReference type="EMBL" id="CP000855">
    <property type="protein sequence ID" value="ACJ15830.1"/>
    <property type="molecule type" value="Genomic_DNA"/>
</dbReference>
<dbReference type="RefSeq" id="WP_012571302.1">
    <property type="nucleotide sequence ID" value="NC_011529.1"/>
</dbReference>
<dbReference type="SMR" id="B6YTE3"/>
<dbReference type="STRING" id="523850.TON_0345"/>
<dbReference type="GeneID" id="7018008"/>
<dbReference type="KEGG" id="ton:TON_0345"/>
<dbReference type="PATRIC" id="fig|523850.10.peg.348"/>
<dbReference type="eggNOG" id="arCOG04228">
    <property type="taxonomic scope" value="Archaea"/>
</dbReference>
<dbReference type="HOGENOM" id="CLU_073661_2_2_2"/>
<dbReference type="OrthoDB" id="6075at2157"/>
<dbReference type="Proteomes" id="UP000002727">
    <property type="component" value="Chromosome"/>
</dbReference>
<dbReference type="GO" id="GO:0005829">
    <property type="term" value="C:cytosol"/>
    <property type="evidence" value="ECO:0007669"/>
    <property type="project" value="TreeGrafter"/>
</dbReference>
<dbReference type="GO" id="GO:0004045">
    <property type="term" value="F:peptidyl-tRNA hydrolase activity"/>
    <property type="evidence" value="ECO:0007669"/>
    <property type="project" value="UniProtKB-UniRule"/>
</dbReference>
<dbReference type="GO" id="GO:0006412">
    <property type="term" value="P:translation"/>
    <property type="evidence" value="ECO:0007669"/>
    <property type="project" value="UniProtKB-UniRule"/>
</dbReference>
<dbReference type="CDD" id="cd02430">
    <property type="entry name" value="PTH2"/>
    <property type="match status" value="1"/>
</dbReference>
<dbReference type="FunFam" id="3.40.1490.10:FF:000001">
    <property type="entry name" value="Peptidyl-tRNA hydrolase 2"/>
    <property type="match status" value="1"/>
</dbReference>
<dbReference type="Gene3D" id="3.40.1490.10">
    <property type="entry name" value="Bit1"/>
    <property type="match status" value="1"/>
</dbReference>
<dbReference type="HAMAP" id="MF_00628">
    <property type="entry name" value="Pept_tRNA_hydro_arch"/>
    <property type="match status" value="1"/>
</dbReference>
<dbReference type="InterPro" id="IPR023476">
    <property type="entry name" value="Pep_tRNA_hydro_II_dom_sf"/>
</dbReference>
<dbReference type="InterPro" id="IPR034759">
    <property type="entry name" value="Pept_tRNA_hydro_arch"/>
</dbReference>
<dbReference type="InterPro" id="IPR002833">
    <property type="entry name" value="PTH2"/>
</dbReference>
<dbReference type="NCBIfam" id="TIGR00283">
    <property type="entry name" value="arch_pth2"/>
    <property type="match status" value="1"/>
</dbReference>
<dbReference type="NCBIfam" id="NF003314">
    <property type="entry name" value="PRK04322.1"/>
    <property type="match status" value="1"/>
</dbReference>
<dbReference type="PANTHER" id="PTHR12649">
    <property type="entry name" value="PEPTIDYL-TRNA HYDROLASE 2"/>
    <property type="match status" value="1"/>
</dbReference>
<dbReference type="PANTHER" id="PTHR12649:SF11">
    <property type="entry name" value="PEPTIDYL-TRNA HYDROLASE 2, MITOCHONDRIAL"/>
    <property type="match status" value="1"/>
</dbReference>
<dbReference type="Pfam" id="PF01981">
    <property type="entry name" value="PTH2"/>
    <property type="match status" value="1"/>
</dbReference>
<dbReference type="SUPFAM" id="SSF102462">
    <property type="entry name" value="Peptidyl-tRNA hydrolase II"/>
    <property type="match status" value="1"/>
</dbReference>
<comment type="function">
    <text evidence="1">The natural substrate for this enzyme may be peptidyl-tRNAs which drop off the ribosome during protein synthesis.</text>
</comment>
<comment type="catalytic activity">
    <reaction evidence="1">
        <text>an N-acyl-L-alpha-aminoacyl-tRNA + H2O = an N-acyl-L-amino acid + a tRNA + H(+)</text>
        <dbReference type="Rhea" id="RHEA:54448"/>
        <dbReference type="Rhea" id="RHEA-COMP:10123"/>
        <dbReference type="Rhea" id="RHEA-COMP:13883"/>
        <dbReference type="ChEBI" id="CHEBI:15377"/>
        <dbReference type="ChEBI" id="CHEBI:15378"/>
        <dbReference type="ChEBI" id="CHEBI:59874"/>
        <dbReference type="ChEBI" id="CHEBI:78442"/>
        <dbReference type="ChEBI" id="CHEBI:138191"/>
        <dbReference type="EC" id="3.1.1.29"/>
    </reaction>
</comment>
<comment type="subcellular location">
    <subcellularLocation>
        <location evidence="1">Cytoplasm</location>
    </subcellularLocation>
</comment>
<comment type="similarity">
    <text evidence="1">Belongs to the PTH2 family.</text>
</comment>
<proteinExistence type="inferred from homology"/>
<name>PTH_THEON</name>
<accession>B6YTE3</accession>
<keyword id="KW-0963">Cytoplasm</keyword>
<keyword id="KW-0378">Hydrolase</keyword>
<reference key="1">
    <citation type="journal article" date="2008" name="J. Bacteriol.">
        <title>The complete genome sequence of Thermococcus onnurineus NA1 reveals a mixed heterotrophic and carboxydotrophic metabolism.</title>
        <authorList>
            <person name="Lee H.S."/>
            <person name="Kang S.G."/>
            <person name="Bae S.S."/>
            <person name="Lim J.K."/>
            <person name="Cho Y."/>
            <person name="Kim Y.J."/>
            <person name="Jeon J.H."/>
            <person name="Cha S.-S."/>
            <person name="Kwon K.K."/>
            <person name="Kim H.-T."/>
            <person name="Park C.-J."/>
            <person name="Lee H.-W."/>
            <person name="Kim S.I."/>
            <person name="Chun J."/>
            <person name="Colwell R.R."/>
            <person name="Kim S.-J."/>
            <person name="Lee J.-H."/>
        </authorList>
    </citation>
    <scope>NUCLEOTIDE SEQUENCE [LARGE SCALE GENOMIC DNA]</scope>
    <source>
        <strain>NA1</strain>
    </source>
</reference>